<proteinExistence type="evidence at transcript level"/>
<reference evidence="12" key="1">
    <citation type="journal article" date="2000" name="Science">
        <title>The genome sequence of Drosophila melanogaster.</title>
        <authorList>
            <person name="Adams M.D."/>
            <person name="Celniker S.E."/>
            <person name="Holt R.A."/>
            <person name="Evans C.A."/>
            <person name="Gocayne J.D."/>
            <person name="Amanatides P.G."/>
            <person name="Scherer S.E."/>
            <person name="Li P.W."/>
            <person name="Hoskins R.A."/>
            <person name="Galle R.F."/>
            <person name="George R.A."/>
            <person name="Lewis S.E."/>
            <person name="Richards S."/>
            <person name="Ashburner M."/>
            <person name="Henderson S.N."/>
            <person name="Sutton G.G."/>
            <person name="Wortman J.R."/>
            <person name="Yandell M.D."/>
            <person name="Zhang Q."/>
            <person name="Chen L.X."/>
            <person name="Brandon R.C."/>
            <person name="Rogers Y.-H.C."/>
            <person name="Blazej R.G."/>
            <person name="Champe M."/>
            <person name="Pfeiffer B.D."/>
            <person name="Wan K.H."/>
            <person name="Doyle C."/>
            <person name="Baxter E.G."/>
            <person name="Helt G."/>
            <person name="Nelson C.R."/>
            <person name="Miklos G.L.G."/>
            <person name="Abril J.F."/>
            <person name="Agbayani A."/>
            <person name="An H.-J."/>
            <person name="Andrews-Pfannkoch C."/>
            <person name="Baldwin D."/>
            <person name="Ballew R.M."/>
            <person name="Basu A."/>
            <person name="Baxendale J."/>
            <person name="Bayraktaroglu L."/>
            <person name="Beasley E.M."/>
            <person name="Beeson K.Y."/>
            <person name="Benos P.V."/>
            <person name="Berman B.P."/>
            <person name="Bhandari D."/>
            <person name="Bolshakov S."/>
            <person name="Borkova D."/>
            <person name="Botchan M.R."/>
            <person name="Bouck J."/>
            <person name="Brokstein P."/>
            <person name="Brottier P."/>
            <person name="Burtis K.C."/>
            <person name="Busam D.A."/>
            <person name="Butler H."/>
            <person name="Cadieu E."/>
            <person name="Center A."/>
            <person name="Chandra I."/>
            <person name="Cherry J.M."/>
            <person name="Cawley S."/>
            <person name="Dahlke C."/>
            <person name="Davenport L.B."/>
            <person name="Davies P."/>
            <person name="de Pablos B."/>
            <person name="Delcher A."/>
            <person name="Deng Z."/>
            <person name="Mays A.D."/>
            <person name="Dew I."/>
            <person name="Dietz S.M."/>
            <person name="Dodson K."/>
            <person name="Doup L.E."/>
            <person name="Downes M."/>
            <person name="Dugan-Rocha S."/>
            <person name="Dunkov B.C."/>
            <person name="Dunn P."/>
            <person name="Durbin K.J."/>
            <person name="Evangelista C.C."/>
            <person name="Ferraz C."/>
            <person name="Ferriera S."/>
            <person name="Fleischmann W."/>
            <person name="Fosler C."/>
            <person name="Gabrielian A.E."/>
            <person name="Garg N.S."/>
            <person name="Gelbart W.M."/>
            <person name="Glasser K."/>
            <person name="Glodek A."/>
            <person name="Gong F."/>
            <person name="Gorrell J.H."/>
            <person name="Gu Z."/>
            <person name="Guan P."/>
            <person name="Harris M."/>
            <person name="Harris N.L."/>
            <person name="Harvey D.A."/>
            <person name="Heiman T.J."/>
            <person name="Hernandez J.R."/>
            <person name="Houck J."/>
            <person name="Hostin D."/>
            <person name="Houston K.A."/>
            <person name="Howland T.J."/>
            <person name="Wei M.-H."/>
            <person name="Ibegwam C."/>
            <person name="Jalali M."/>
            <person name="Kalush F."/>
            <person name="Karpen G.H."/>
            <person name="Ke Z."/>
            <person name="Kennison J.A."/>
            <person name="Ketchum K.A."/>
            <person name="Kimmel B.E."/>
            <person name="Kodira C.D."/>
            <person name="Kraft C.L."/>
            <person name="Kravitz S."/>
            <person name="Kulp D."/>
            <person name="Lai Z."/>
            <person name="Lasko P."/>
            <person name="Lei Y."/>
            <person name="Levitsky A.A."/>
            <person name="Li J.H."/>
            <person name="Li Z."/>
            <person name="Liang Y."/>
            <person name="Lin X."/>
            <person name="Liu X."/>
            <person name="Mattei B."/>
            <person name="McIntosh T.C."/>
            <person name="McLeod M.P."/>
            <person name="McPherson D."/>
            <person name="Merkulov G."/>
            <person name="Milshina N.V."/>
            <person name="Mobarry C."/>
            <person name="Morris J."/>
            <person name="Moshrefi A."/>
            <person name="Mount S.M."/>
            <person name="Moy M."/>
            <person name="Murphy B."/>
            <person name="Murphy L."/>
            <person name="Muzny D.M."/>
            <person name="Nelson D.L."/>
            <person name="Nelson D.R."/>
            <person name="Nelson K.A."/>
            <person name="Nixon K."/>
            <person name="Nusskern D.R."/>
            <person name="Pacleb J.M."/>
            <person name="Palazzolo M."/>
            <person name="Pittman G.S."/>
            <person name="Pan S."/>
            <person name="Pollard J."/>
            <person name="Puri V."/>
            <person name="Reese M.G."/>
            <person name="Reinert K."/>
            <person name="Remington K."/>
            <person name="Saunders R.D.C."/>
            <person name="Scheeler F."/>
            <person name="Shen H."/>
            <person name="Shue B.C."/>
            <person name="Siden-Kiamos I."/>
            <person name="Simpson M."/>
            <person name="Skupski M.P."/>
            <person name="Smith T.J."/>
            <person name="Spier E."/>
            <person name="Spradling A.C."/>
            <person name="Stapleton M."/>
            <person name="Strong R."/>
            <person name="Sun E."/>
            <person name="Svirskas R."/>
            <person name="Tector C."/>
            <person name="Turner R."/>
            <person name="Venter E."/>
            <person name="Wang A.H."/>
            <person name="Wang X."/>
            <person name="Wang Z.-Y."/>
            <person name="Wassarman D.A."/>
            <person name="Weinstock G.M."/>
            <person name="Weissenbach J."/>
            <person name="Williams S.M."/>
            <person name="Woodage T."/>
            <person name="Worley K.C."/>
            <person name="Wu D."/>
            <person name="Yang S."/>
            <person name="Yao Q.A."/>
            <person name="Ye J."/>
            <person name="Yeh R.-F."/>
            <person name="Zaveri J.S."/>
            <person name="Zhan M."/>
            <person name="Zhang G."/>
            <person name="Zhao Q."/>
            <person name="Zheng L."/>
            <person name="Zheng X.H."/>
            <person name="Zhong F.N."/>
            <person name="Zhong W."/>
            <person name="Zhou X."/>
            <person name="Zhu S.C."/>
            <person name="Zhu X."/>
            <person name="Smith H.O."/>
            <person name="Gibbs R.A."/>
            <person name="Myers E.W."/>
            <person name="Rubin G.M."/>
            <person name="Venter J.C."/>
        </authorList>
    </citation>
    <scope>NUCLEOTIDE SEQUENCE [LARGE SCALE GENOMIC DNA]</scope>
    <source>
        <strain evidence="12">Berkeley</strain>
    </source>
</reference>
<reference evidence="12" key="2">
    <citation type="journal article" date="2002" name="Genome Biol.">
        <title>Annotation of the Drosophila melanogaster euchromatic genome: a systematic review.</title>
        <authorList>
            <person name="Misra S."/>
            <person name="Crosby M.A."/>
            <person name="Mungall C.J."/>
            <person name="Matthews B.B."/>
            <person name="Campbell K.S."/>
            <person name="Hradecky P."/>
            <person name="Huang Y."/>
            <person name="Kaminker J.S."/>
            <person name="Millburn G.H."/>
            <person name="Prochnik S.E."/>
            <person name="Smith C.D."/>
            <person name="Tupy J.L."/>
            <person name="Whitfield E.J."/>
            <person name="Bayraktaroglu L."/>
            <person name="Berman B.P."/>
            <person name="Bettencourt B.R."/>
            <person name="Celniker S.E."/>
            <person name="de Grey A.D.N.J."/>
            <person name="Drysdale R.A."/>
            <person name="Harris N.L."/>
            <person name="Richter J."/>
            <person name="Russo S."/>
            <person name="Schroeder A.J."/>
            <person name="Shu S.Q."/>
            <person name="Stapleton M."/>
            <person name="Yamada C."/>
            <person name="Ashburner M."/>
            <person name="Gelbart W.M."/>
            <person name="Rubin G.M."/>
            <person name="Lewis S.E."/>
        </authorList>
    </citation>
    <scope>GENOME REANNOTATION</scope>
    <source>
        <strain evidence="12">Berkeley</strain>
    </source>
</reference>
<reference evidence="9" key="3">
    <citation type="journal article" date="2002" name="Genome Biol.">
        <title>A Drosophila full-length cDNA resource.</title>
        <authorList>
            <person name="Stapleton M."/>
            <person name="Carlson J.W."/>
            <person name="Brokstein P."/>
            <person name="Yu C."/>
            <person name="Champe M."/>
            <person name="George R.A."/>
            <person name="Guarin H."/>
            <person name="Kronmiller B."/>
            <person name="Pacleb J.M."/>
            <person name="Park S."/>
            <person name="Wan K.H."/>
            <person name="Rubin G.M."/>
            <person name="Celniker S.E."/>
        </authorList>
    </citation>
    <scope>NUCLEOTIDE SEQUENCE [LARGE SCALE MRNA] (ISOFORM A)</scope>
    <source>
        <strain evidence="9">Berkeley</strain>
        <tissue evidence="9">Embryo</tissue>
    </source>
</reference>
<reference evidence="10" key="4">
    <citation type="submission" date="2010-04" db="EMBL/GenBank/DDBJ databases">
        <authorList>
            <person name="Carlson J."/>
            <person name="Booth B."/>
            <person name="Frise E."/>
            <person name="Sandler J."/>
            <person name="Wan K."/>
            <person name="Yu C."/>
            <person name="Celniker S."/>
        </authorList>
    </citation>
    <scope>NUCLEOTIDE SEQUENCE [LARGE SCALE MRNA] (ISOFORM B)</scope>
    <source>
        <strain evidence="10">Berkeley</strain>
    </source>
</reference>
<reference evidence="8" key="5">
    <citation type="journal article" date="2014" name="Genetics">
        <title>Regulation of aggression by obesity-linked genes TfAP-2 and Twz through octopamine signaling in Drosophila.</title>
        <authorList>
            <person name="Williams M.J."/>
            <person name="Goergen P."/>
            <person name="Rajendran J."/>
            <person name="Klockars A."/>
            <person name="Kasagiannis A."/>
            <person name="Fredriksson R."/>
            <person name="Schioeth H.B."/>
        </authorList>
    </citation>
    <scope>FUNCTION</scope>
    <scope>DISRUPTION PHENOTYPE</scope>
</reference>
<reference evidence="8" key="6">
    <citation type="journal article" date="2014" name="PLoS Genet.">
        <title>Obesity-linked homologues TfAP-2 and Twz establish meal frequency in Drosophila melanogaster.</title>
        <authorList>
            <person name="Williams M.J."/>
            <person name="Goergen P."/>
            <person name="Rajendran J."/>
            <person name="Zheleznyakova G."/>
            <person name="Haegglund M.G."/>
            <person name="Perland E."/>
            <person name="Bagchi S."/>
            <person name="Kalogeropoulou A."/>
            <person name="Khan Z."/>
            <person name="Fredriksson R."/>
            <person name="Schioeth H.B."/>
        </authorList>
    </citation>
    <scope>FUNCTION</scope>
    <scope>INDUCTION BY STARVATION</scope>
    <scope>DISRUPTION PHENOTYPE</scope>
</reference>
<reference evidence="8" key="7">
    <citation type="journal article" date="2018" name="Cell Rep.">
        <title>The Drosophila Small Conductance Calcium-Activated Potassium Channel Negatively Regulates Nociception.</title>
        <authorList>
            <person name="Walcott K.C.E."/>
            <person name="Mauthner S.E."/>
            <person name="Tsubouchi A."/>
            <person name="Robertson J."/>
            <person name="Tracey W.D."/>
        </authorList>
    </citation>
    <scope>FUNCTION</scope>
    <scope>DISRUPTION PHENOTYPE</scope>
</reference>
<protein>
    <recommendedName>
        <fullName evidence="6">BTB/POZ domain-containing protein Tiwaz</fullName>
    </recommendedName>
    <alternativeName>
        <fullName evidence="7">Potassium channel tetramerization domain-containing protein Tiwaz</fullName>
    </alternativeName>
</protein>
<feature type="chain" id="PRO_0000454471" description="BTB/POZ domain-containing protein Tiwaz">
    <location>
        <begin position="1"/>
        <end position="367"/>
    </location>
</feature>
<feature type="domain" description="BTB" evidence="1">
    <location>
        <begin position="135"/>
        <end position="205"/>
    </location>
</feature>
<feature type="region of interest" description="Disordered" evidence="2">
    <location>
        <begin position="16"/>
        <end position="46"/>
    </location>
</feature>
<feature type="region of interest" description="Disordered" evidence="2">
    <location>
        <begin position="62"/>
        <end position="87"/>
    </location>
</feature>
<feature type="region of interest" description="Disordered" evidence="2">
    <location>
        <begin position="240"/>
        <end position="261"/>
    </location>
</feature>
<feature type="compositionally biased region" description="Basic and acidic residues" evidence="2">
    <location>
        <begin position="28"/>
        <end position="45"/>
    </location>
</feature>
<feature type="splice variant" id="VSP_061346" description="In isoform A.">
    <location>
        <begin position="1"/>
        <end position="29"/>
    </location>
</feature>
<organism evidence="12">
    <name type="scientific">Drosophila melanogaster</name>
    <name type="common">Fruit fly</name>
    <dbReference type="NCBI Taxonomy" id="7227"/>
    <lineage>
        <taxon>Eukaryota</taxon>
        <taxon>Metazoa</taxon>
        <taxon>Ecdysozoa</taxon>
        <taxon>Arthropoda</taxon>
        <taxon>Hexapoda</taxon>
        <taxon>Insecta</taxon>
        <taxon>Pterygota</taxon>
        <taxon>Neoptera</taxon>
        <taxon>Endopterygota</taxon>
        <taxon>Diptera</taxon>
        <taxon>Brachycera</taxon>
        <taxon>Muscomorpha</taxon>
        <taxon>Ephydroidea</taxon>
        <taxon>Drosophilidae</taxon>
        <taxon>Drosophila</taxon>
        <taxon>Sophophora</taxon>
    </lineage>
</organism>
<evidence type="ECO:0000255" key="1">
    <source>
        <dbReference type="PROSITE-ProRule" id="PRU00037"/>
    </source>
</evidence>
<evidence type="ECO:0000256" key="2">
    <source>
        <dbReference type="SAM" id="MobiDB-lite"/>
    </source>
</evidence>
<evidence type="ECO:0000269" key="3">
    <source>
    </source>
</evidence>
<evidence type="ECO:0000269" key="4">
    <source>
    </source>
</evidence>
<evidence type="ECO:0000269" key="5">
    <source>
    </source>
</evidence>
<evidence type="ECO:0000303" key="6">
    <source>
    </source>
</evidence>
<evidence type="ECO:0000303" key="7">
    <source>
    </source>
</evidence>
<evidence type="ECO:0000305" key="8"/>
<evidence type="ECO:0000312" key="9">
    <source>
        <dbReference type="EMBL" id="AAM48388.1"/>
    </source>
</evidence>
<evidence type="ECO:0000312" key="10">
    <source>
        <dbReference type="EMBL" id="ADG03446.1"/>
    </source>
</evidence>
<evidence type="ECO:0000312" key="11">
    <source>
        <dbReference type="FlyBase" id="FBgn0034636"/>
    </source>
</evidence>
<evidence type="ECO:0000312" key="12">
    <source>
        <dbReference type="Proteomes" id="UP000000803"/>
    </source>
</evidence>
<accession>D5SHR0</accession>
<accession>Q9W2F9</accession>
<gene>
    <name evidence="6 11" type="primary">twz</name>
    <name evidence="11" type="ORF">CG10440</name>
</gene>
<name>TIWAZ_DROME</name>
<sequence>MQVRTPFVALDQRSPLTVDSSCPKRKKCDMDRERERDVKALEPRDLSSTGRIYARSDIKISSSPTVSPTISNSSSPTPTPPASSSVTPLGLPGAVAAAAAAVGGASSAGASSYLHGNHKPITGIPCVAAASRYTAPVHIDVGGTIYTSSLETLTKYPESKLAKLFNGQIPIVLDSLKQHYFIDRDGGMFRHILNFMRNSRLLIAEDFPDLELLLEEARYYEVEPMIKQLESMRKDRVRNGNYLVAPPTPPARHIKTSPRTSASPECNYEVVALHISPDLGERIMLSAERALLDELFPEASQATQSSRSGVSWNQGDWGQIIRFPLNGYCKLNSVQVLTRLLNAGFTIEASVGGQQFSEYLLARRVPM</sequence>
<keyword id="KW-0025">Alternative splicing</keyword>
<keyword id="KW-1185">Reference proteome</keyword>
<dbReference type="EMBL" id="AE013599">
    <property type="protein sequence ID" value="AAF46733.1"/>
    <property type="molecule type" value="Genomic_DNA"/>
</dbReference>
<dbReference type="EMBL" id="AE013599">
    <property type="protein sequence ID" value="AFH08202.1"/>
    <property type="molecule type" value="Genomic_DNA"/>
</dbReference>
<dbReference type="EMBL" id="AY118359">
    <property type="protein sequence ID" value="AAM48388.1"/>
    <property type="molecule type" value="mRNA"/>
</dbReference>
<dbReference type="EMBL" id="BT124861">
    <property type="protein sequence ID" value="ADG03446.1"/>
    <property type="molecule type" value="mRNA"/>
</dbReference>
<dbReference type="RefSeq" id="NP_001246449.1">
    <molecule id="D5SHR0-1"/>
    <property type="nucleotide sequence ID" value="NM_001259520.1"/>
</dbReference>
<dbReference type="RefSeq" id="NP_611588.1">
    <molecule id="D5SHR0-2"/>
    <property type="nucleotide sequence ID" value="NM_137744.2"/>
</dbReference>
<dbReference type="SMR" id="D5SHR0"/>
<dbReference type="FunCoup" id="D5SHR0">
    <property type="interactions" value="169"/>
</dbReference>
<dbReference type="IntAct" id="D5SHR0">
    <property type="interactions" value="14"/>
</dbReference>
<dbReference type="STRING" id="7227.FBpp0300865"/>
<dbReference type="GlyGen" id="D5SHR0">
    <property type="glycosylation" value="3 sites"/>
</dbReference>
<dbReference type="PaxDb" id="7227-FBpp0300865"/>
<dbReference type="DNASU" id="37456"/>
<dbReference type="EnsemblMetazoa" id="FBtr0071692">
    <molecule id="D5SHR0-2"/>
    <property type="protein sequence ID" value="FBpp0071609"/>
    <property type="gene ID" value="FBgn0034636"/>
</dbReference>
<dbReference type="EnsemblMetazoa" id="FBtr0308642">
    <molecule id="D5SHR0-1"/>
    <property type="protein sequence ID" value="FBpp0300865"/>
    <property type="gene ID" value="FBgn0034636"/>
</dbReference>
<dbReference type="GeneID" id="37456"/>
<dbReference type="KEGG" id="dme:Dmel_CG10440"/>
<dbReference type="UCSC" id="CG10440-RA">
    <property type="organism name" value="d. melanogaster"/>
</dbReference>
<dbReference type="AGR" id="FB:FBgn0034636"/>
<dbReference type="CTD" id="37456"/>
<dbReference type="FlyBase" id="FBgn0034636">
    <property type="gene designation" value="twz"/>
</dbReference>
<dbReference type="VEuPathDB" id="VectorBase:FBgn0034636"/>
<dbReference type="eggNOG" id="KOG2723">
    <property type="taxonomic scope" value="Eukaryota"/>
</dbReference>
<dbReference type="GeneTree" id="ENSGT00940000170674"/>
<dbReference type="HOGENOM" id="CLU_061268_0_0_1"/>
<dbReference type="InParanoid" id="D5SHR0"/>
<dbReference type="OMA" id="YFDIVPM"/>
<dbReference type="OrthoDB" id="2414723at2759"/>
<dbReference type="PhylomeDB" id="D5SHR0"/>
<dbReference type="Reactome" id="R-DME-8866904">
    <property type="pathway name" value="Negative regulation of activity of TFAP2 (AP-2) family transcription factors"/>
</dbReference>
<dbReference type="BioGRID-ORCS" id="37456">
    <property type="hits" value="0 hits in 3 CRISPR screens"/>
</dbReference>
<dbReference type="GenomeRNAi" id="37456"/>
<dbReference type="PRO" id="PR:D5SHR0"/>
<dbReference type="Proteomes" id="UP000000803">
    <property type="component" value="Chromosome 2R"/>
</dbReference>
<dbReference type="Bgee" id="FBgn0034636">
    <property type="expression patterns" value="Expressed in T neuron T4c (Drosophila) in embryonic/larval optic lobe (Drosophila) and 68 other cell types or tissues"/>
</dbReference>
<dbReference type="ExpressionAtlas" id="D5SHR0">
    <property type="expression patterns" value="baseline and differential"/>
</dbReference>
<dbReference type="GO" id="GO:0003714">
    <property type="term" value="F:transcription corepressor activity"/>
    <property type="evidence" value="ECO:0000318"/>
    <property type="project" value="GO_Central"/>
</dbReference>
<dbReference type="GO" id="GO:0008343">
    <property type="term" value="P:adult feeding behavior"/>
    <property type="evidence" value="ECO:0000315"/>
    <property type="project" value="FlyBase"/>
</dbReference>
<dbReference type="GO" id="GO:0008344">
    <property type="term" value="P:adult locomotory behavior"/>
    <property type="evidence" value="ECO:0000315"/>
    <property type="project" value="FlyBase"/>
</dbReference>
<dbReference type="GO" id="GO:0002121">
    <property type="term" value="P:inter-male aggressive behavior"/>
    <property type="evidence" value="ECO:0000315"/>
    <property type="project" value="FlyBase"/>
</dbReference>
<dbReference type="GO" id="GO:0008049">
    <property type="term" value="P:male courtship behavior"/>
    <property type="evidence" value="ECO:0000315"/>
    <property type="project" value="FlyBase"/>
</dbReference>
<dbReference type="GO" id="GO:0045892">
    <property type="term" value="P:negative regulation of DNA-templated transcription"/>
    <property type="evidence" value="ECO:0000318"/>
    <property type="project" value="GO_Central"/>
</dbReference>
<dbReference type="GO" id="GO:2000130">
    <property type="term" value="P:positive regulation of octopamine signaling pathway"/>
    <property type="evidence" value="ECO:0000315"/>
    <property type="project" value="UniProtKB"/>
</dbReference>
<dbReference type="GO" id="GO:0051260">
    <property type="term" value="P:protein homooligomerization"/>
    <property type="evidence" value="ECO:0007669"/>
    <property type="project" value="InterPro"/>
</dbReference>
<dbReference type="CDD" id="cd18361">
    <property type="entry name" value="BTB_POZ_KCTD1-like"/>
    <property type="match status" value="1"/>
</dbReference>
<dbReference type="FunFam" id="3.30.710.10:FF:000003">
    <property type="entry name" value="BTB/POZ domain-containing protein KCTD6 isoform X2"/>
    <property type="match status" value="1"/>
</dbReference>
<dbReference type="Gene3D" id="3.30.710.10">
    <property type="entry name" value="Potassium Channel Kv1.1, Chain A"/>
    <property type="match status" value="1"/>
</dbReference>
<dbReference type="InterPro" id="IPR000210">
    <property type="entry name" value="BTB/POZ_dom"/>
</dbReference>
<dbReference type="InterPro" id="IPR048595">
    <property type="entry name" value="KCTD1-15-like_C"/>
</dbReference>
<dbReference type="InterPro" id="IPR011333">
    <property type="entry name" value="SKP1/BTB/POZ_sf"/>
</dbReference>
<dbReference type="InterPro" id="IPR003131">
    <property type="entry name" value="T1-type_BTB"/>
</dbReference>
<dbReference type="PANTHER" id="PTHR14499:SF67">
    <property type="entry name" value="BTB_POZ DOMAIN-CONTAINING PROTEIN TIWAZ"/>
    <property type="match status" value="1"/>
</dbReference>
<dbReference type="PANTHER" id="PTHR14499">
    <property type="entry name" value="POTASSIUM CHANNEL TETRAMERIZATION DOMAIN-CONTAINING"/>
    <property type="match status" value="1"/>
</dbReference>
<dbReference type="Pfam" id="PF02214">
    <property type="entry name" value="BTB_2"/>
    <property type="match status" value="1"/>
</dbReference>
<dbReference type="Pfam" id="PF20871">
    <property type="entry name" value="KCTD1-15_CTD"/>
    <property type="match status" value="1"/>
</dbReference>
<dbReference type="SMART" id="SM00225">
    <property type="entry name" value="BTB"/>
    <property type="match status" value="1"/>
</dbReference>
<dbReference type="SUPFAM" id="SSF54695">
    <property type="entry name" value="POZ domain"/>
    <property type="match status" value="1"/>
</dbReference>
<comment type="function">
    <text evidence="3 4 5">Functions with the transcription factor TfAP-2 to regulate octopamine neuronal signaling pathways that control behaviors such as male aggression, male mating, and the initiation of feeding (PubMed:24142897, PubMed:25187989, PubMed:30231996). Required for TfAP-2 transcriptional activity in octopaminergic neurons (PubMed:24142897, PubMed:25187989). Functions with TfAP-2 to regulate expression of genes which are involved in promoting octopamine production and secretion from octopaminergic neurons, such as Tbh and Vmat (PubMed:24142897, PubMed:25187989). Octopamine then modulates feeding and male aggression by regulating the expression of the satiation hormone Dsk in insulin-producing cells (IPCs) (PubMed:24142897, PubMed:25187989). Functions with octopamine and Dsk as part of a negative feedback loop to prevent overeating; acts with TfAP-2 to regulate octopamine signaling pathways that initiate feeding, then octopamine activates expression of Dsk which inhibits consummatory behavior (PubMed:25187989). May also be involved in negatively regulating nociception in larvae to prevent spontaneous pain and hyperalgesia (PubMed:30231996).</text>
</comment>
<comment type="alternative products">
    <event type="alternative splicing"/>
    <isoform>
        <id>D5SHR0-1</id>
        <name evidence="11">B</name>
        <sequence type="displayed"/>
    </isoform>
    <isoform>
        <id>D5SHR0-2</id>
        <name evidence="11">A</name>
        <sequence type="described" ref="VSP_061346"/>
    </isoform>
</comment>
<comment type="induction">
    <text evidence="4">Up-regulated in adults by starvation for 48 hours, whereas no up-regulation was detected at 24 hours.</text>
</comment>
<comment type="disruption phenotype">
    <text evidence="3 4 5">RNAi-mediated knockdown in adult octopaminergic neurons, disrupts TfAP-2 expression resulting in behavioral abnormalities such as increased male aggression, reduced walking pace and overeating (PubMed:24142897, PubMed:25187989). Males display an increase in low-intensity fighting, with males performing more wing flicks and shoves during a 20 minutes fighting bout (PubMed:24142897). Males also display increased courtship behaviors, such as singing, circling and abdomen bends, towards males and virgin females (PubMed:24142897). Adults also eat significantly more over a 24 hr period and some overeat after starvation (PubMed:25187989). Inhibits expression of TfAP-2 in adults fed a normal diet, and inhibits the up-regulation of TfAP-2 in adults fed a low calorie diet or undergoing starvation (PubMed:25187989). Adults display decreased expression of the octopamine synthesis genes Tbh and Vmat, and the octopmaine signaling gene Dsk (PubMed:24142897). RNAi-mediated knockdown in class I, II, III, and IV md neurons, results in hypersensitive nociception behaviors, with larvae displaying reduced nocifensive escape locomotion (NEL) response latency to a 42 degrees Celsius heat probe (PubMed:30231996).</text>
</comment>